<gene>
    <name evidence="1" type="primary">rplV</name>
    <name type="ordered locus">Bd2971</name>
</gene>
<evidence type="ECO:0000255" key="1">
    <source>
        <dbReference type="HAMAP-Rule" id="MF_01331"/>
    </source>
</evidence>
<evidence type="ECO:0000305" key="2"/>
<organism>
    <name type="scientific">Bdellovibrio bacteriovorus (strain ATCC 15356 / DSM 50701 / NCIMB 9529 / HD100)</name>
    <dbReference type="NCBI Taxonomy" id="264462"/>
    <lineage>
        <taxon>Bacteria</taxon>
        <taxon>Pseudomonadati</taxon>
        <taxon>Bdellovibrionota</taxon>
        <taxon>Bdellovibrionia</taxon>
        <taxon>Bdellovibrionales</taxon>
        <taxon>Pseudobdellovibrionaceae</taxon>
        <taxon>Bdellovibrio</taxon>
    </lineage>
</organism>
<reference key="1">
    <citation type="journal article" date="2004" name="Science">
        <title>A predator unmasked: life cycle of Bdellovibrio bacteriovorus from a genomic perspective.</title>
        <authorList>
            <person name="Rendulic S."/>
            <person name="Jagtap P."/>
            <person name="Rosinus A."/>
            <person name="Eppinger M."/>
            <person name="Baar C."/>
            <person name="Lanz C."/>
            <person name="Keller H."/>
            <person name="Lambert C."/>
            <person name="Evans K.J."/>
            <person name="Goesmann A."/>
            <person name="Meyer F."/>
            <person name="Sockett R.E."/>
            <person name="Schuster S.C."/>
        </authorList>
    </citation>
    <scope>NUCLEOTIDE SEQUENCE [LARGE SCALE GENOMIC DNA]</scope>
    <source>
        <strain>ATCC 15356 / DSM 50701 / NCIMB 9529 / HD100</strain>
    </source>
</reference>
<accession>Q6MJ19</accession>
<sequence length="110" mass="12315">MEVKASLKYARVGAQKARLVADLVRGKDVNEAVKTLTFLNKKTAGMVKKLIESAVANAEYKKVMDVDSLYVKAIWVDQGPVLKRFRPRAQGRAFGVRKKTSHINVVLEEK</sequence>
<dbReference type="EMBL" id="BX842654">
    <property type="protein sequence ID" value="CAE80743.1"/>
    <property type="molecule type" value="Genomic_DNA"/>
</dbReference>
<dbReference type="RefSeq" id="WP_011165347.1">
    <property type="nucleotide sequence ID" value="NC_005363.1"/>
</dbReference>
<dbReference type="SMR" id="Q6MJ19"/>
<dbReference type="STRING" id="264462.Bd2971"/>
<dbReference type="GeneID" id="93013834"/>
<dbReference type="KEGG" id="bba:Bd2971"/>
<dbReference type="eggNOG" id="COG0091">
    <property type="taxonomic scope" value="Bacteria"/>
</dbReference>
<dbReference type="HOGENOM" id="CLU_083987_3_3_7"/>
<dbReference type="Proteomes" id="UP000008080">
    <property type="component" value="Chromosome"/>
</dbReference>
<dbReference type="GO" id="GO:0022625">
    <property type="term" value="C:cytosolic large ribosomal subunit"/>
    <property type="evidence" value="ECO:0007669"/>
    <property type="project" value="TreeGrafter"/>
</dbReference>
<dbReference type="GO" id="GO:0019843">
    <property type="term" value="F:rRNA binding"/>
    <property type="evidence" value="ECO:0007669"/>
    <property type="project" value="UniProtKB-UniRule"/>
</dbReference>
<dbReference type="GO" id="GO:0003735">
    <property type="term" value="F:structural constituent of ribosome"/>
    <property type="evidence" value="ECO:0007669"/>
    <property type="project" value="InterPro"/>
</dbReference>
<dbReference type="GO" id="GO:0006412">
    <property type="term" value="P:translation"/>
    <property type="evidence" value="ECO:0007669"/>
    <property type="project" value="UniProtKB-UniRule"/>
</dbReference>
<dbReference type="CDD" id="cd00336">
    <property type="entry name" value="Ribosomal_L22"/>
    <property type="match status" value="1"/>
</dbReference>
<dbReference type="Gene3D" id="3.90.470.10">
    <property type="entry name" value="Ribosomal protein L22/L17"/>
    <property type="match status" value="1"/>
</dbReference>
<dbReference type="HAMAP" id="MF_01331_B">
    <property type="entry name" value="Ribosomal_uL22_B"/>
    <property type="match status" value="1"/>
</dbReference>
<dbReference type="InterPro" id="IPR001063">
    <property type="entry name" value="Ribosomal_uL22"/>
</dbReference>
<dbReference type="InterPro" id="IPR005727">
    <property type="entry name" value="Ribosomal_uL22_bac/chlpt-type"/>
</dbReference>
<dbReference type="InterPro" id="IPR047867">
    <property type="entry name" value="Ribosomal_uL22_bac/org-type"/>
</dbReference>
<dbReference type="InterPro" id="IPR018260">
    <property type="entry name" value="Ribosomal_uL22_CS"/>
</dbReference>
<dbReference type="InterPro" id="IPR036394">
    <property type="entry name" value="Ribosomal_uL22_sf"/>
</dbReference>
<dbReference type="NCBIfam" id="TIGR01044">
    <property type="entry name" value="rplV_bact"/>
    <property type="match status" value="1"/>
</dbReference>
<dbReference type="PANTHER" id="PTHR13501">
    <property type="entry name" value="CHLOROPLAST 50S RIBOSOMAL PROTEIN L22-RELATED"/>
    <property type="match status" value="1"/>
</dbReference>
<dbReference type="PANTHER" id="PTHR13501:SF8">
    <property type="entry name" value="LARGE RIBOSOMAL SUBUNIT PROTEIN UL22M"/>
    <property type="match status" value="1"/>
</dbReference>
<dbReference type="Pfam" id="PF00237">
    <property type="entry name" value="Ribosomal_L22"/>
    <property type="match status" value="1"/>
</dbReference>
<dbReference type="SUPFAM" id="SSF54843">
    <property type="entry name" value="Ribosomal protein L22"/>
    <property type="match status" value="1"/>
</dbReference>
<dbReference type="PROSITE" id="PS00464">
    <property type="entry name" value="RIBOSOMAL_L22"/>
    <property type="match status" value="1"/>
</dbReference>
<protein>
    <recommendedName>
        <fullName evidence="1">Large ribosomal subunit protein uL22</fullName>
    </recommendedName>
    <alternativeName>
        <fullName evidence="2">50S ribosomal protein L22</fullName>
    </alternativeName>
</protein>
<proteinExistence type="inferred from homology"/>
<feature type="chain" id="PRO_0000125121" description="Large ribosomal subunit protein uL22">
    <location>
        <begin position="1"/>
        <end position="110"/>
    </location>
</feature>
<name>RL22_BDEBA</name>
<keyword id="KW-1185">Reference proteome</keyword>
<keyword id="KW-0687">Ribonucleoprotein</keyword>
<keyword id="KW-0689">Ribosomal protein</keyword>
<keyword id="KW-0694">RNA-binding</keyword>
<keyword id="KW-0699">rRNA-binding</keyword>
<comment type="function">
    <text evidence="1">This protein binds specifically to 23S rRNA; its binding is stimulated by other ribosomal proteins, e.g. L4, L17, and L20. It is important during the early stages of 50S assembly. It makes multiple contacts with different domains of the 23S rRNA in the assembled 50S subunit and ribosome (By similarity).</text>
</comment>
<comment type="function">
    <text evidence="1">The globular domain of the protein is located near the polypeptide exit tunnel on the outside of the subunit, while an extended beta-hairpin is found that lines the wall of the exit tunnel in the center of the 70S ribosome.</text>
</comment>
<comment type="subunit">
    <text evidence="1">Part of the 50S ribosomal subunit.</text>
</comment>
<comment type="similarity">
    <text evidence="1">Belongs to the universal ribosomal protein uL22 family.</text>
</comment>